<accession>B3CVD9</accession>
<comment type="function">
    <text evidence="1">Participates actively in the response to hyperosmotic and heat shock by preventing the aggregation of stress-denatured proteins and by disaggregating proteins, also in an autonomous, DnaK-independent fashion. Unfolded proteins bind initially to DnaJ; upon interaction with the DnaJ-bound protein, DnaK hydrolyzes its bound ATP, resulting in the formation of a stable complex. GrpE releases ADP from DnaK; ATP binding to DnaK triggers the release of the substrate protein, thus completing the reaction cycle. Several rounds of ATP-dependent interactions between DnaJ, DnaK and GrpE are required for fully efficient folding. Also involved, together with DnaK and GrpE, in the DNA replication of plasmids through activation of initiation proteins.</text>
</comment>
<comment type="cofactor">
    <cofactor evidence="1">
        <name>Zn(2+)</name>
        <dbReference type="ChEBI" id="CHEBI:29105"/>
    </cofactor>
    <text evidence="1">Binds 2 Zn(2+) ions per monomer.</text>
</comment>
<comment type="subunit">
    <text evidence="1">Homodimer.</text>
</comment>
<comment type="subcellular location">
    <subcellularLocation>
        <location evidence="1">Cytoplasm</location>
    </subcellularLocation>
</comment>
<comment type="domain">
    <text evidence="1">The J domain is necessary and sufficient to stimulate DnaK ATPase activity. Zinc center 1 plays an important role in the autonomous, DnaK-independent chaperone activity of DnaJ. Zinc center 2 is essential for interaction with DnaK and for DnaJ activity.</text>
</comment>
<comment type="similarity">
    <text evidence="1">Belongs to the DnaJ family.</text>
</comment>
<dbReference type="EMBL" id="AP008981">
    <property type="protein sequence ID" value="BAG41336.1"/>
    <property type="molecule type" value="Genomic_DNA"/>
</dbReference>
<dbReference type="RefSeq" id="WP_012462285.1">
    <property type="nucleotide sequence ID" value="NC_010793.1"/>
</dbReference>
<dbReference type="SMR" id="B3CVD9"/>
<dbReference type="GeneID" id="89459190"/>
<dbReference type="KEGG" id="ott:OTT_1878"/>
<dbReference type="HOGENOM" id="CLU_017633_0_7_5"/>
<dbReference type="OrthoDB" id="9779889at2"/>
<dbReference type="Proteomes" id="UP000001033">
    <property type="component" value="Chromosome"/>
</dbReference>
<dbReference type="GO" id="GO:0005737">
    <property type="term" value="C:cytoplasm"/>
    <property type="evidence" value="ECO:0007669"/>
    <property type="project" value="UniProtKB-SubCell"/>
</dbReference>
<dbReference type="GO" id="GO:0005524">
    <property type="term" value="F:ATP binding"/>
    <property type="evidence" value="ECO:0007669"/>
    <property type="project" value="InterPro"/>
</dbReference>
<dbReference type="GO" id="GO:0031072">
    <property type="term" value="F:heat shock protein binding"/>
    <property type="evidence" value="ECO:0007669"/>
    <property type="project" value="InterPro"/>
</dbReference>
<dbReference type="GO" id="GO:0051082">
    <property type="term" value="F:unfolded protein binding"/>
    <property type="evidence" value="ECO:0007669"/>
    <property type="project" value="UniProtKB-UniRule"/>
</dbReference>
<dbReference type="GO" id="GO:0008270">
    <property type="term" value="F:zinc ion binding"/>
    <property type="evidence" value="ECO:0007669"/>
    <property type="project" value="UniProtKB-UniRule"/>
</dbReference>
<dbReference type="GO" id="GO:0051085">
    <property type="term" value="P:chaperone cofactor-dependent protein refolding"/>
    <property type="evidence" value="ECO:0007669"/>
    <property type="project" value="TreeGrafter"/>
</dbReference>
<dbReference type="GO" id="GO:0006260">
    <property type="term" value="P:DNA replication"/>
    <property type="evidence" value="ECO:0007669"/>
    <property type="project" value="UniProtKB-KW"/>
</dbReference>
<dbReference type="GO" id="GO:0042026">
    <property type="term" value="P:protein refolding"/>
    <property type="evidence" value="ECO:0007669"/>
    <property type="project" value="TreeGrafter"/>
</dbReference>
<dbReference type="GO" id="GO:0009408">
    <property type="term" value="P:response to heat"/>
    <property type="evidence" value="ECO:0007669"/>
    <property type="project" value="InterPro"/>
</dbReference>
<dbReference type="CDD" id="cd06257">
    <property type="entry name" value="DnaJ"/>
    <property type="match status" value="1"/>
</dbReference>
<dbReference type="CDD" id="cd10747">
    <property type="entry name" value="DnaJ_C"/>
    <property type="match status" value="1"/>
</dbReference>
<dbReference type="FunFam" id="1.10.287.110:FF:000034">
    <property type="entry name" value="Chaperone protein DnaJ"/>
    <property type="match status" value="1"/>
</dbReference>
<dbReference type="FunFam" id="2.60.260.20:FF:000005">
    <property type="entry name" value="Chaperone protein dnaJ 1, mitochondrial"/>
    <property type="match status" value="1"/>
</dbReference>
<dbReference type="FunFam" id="2.10.230.10:FF:000002">
    <property type="entry name" value="Molecular chaperone DnaJ"/>
    <property type="match status" value="1"/>
</dbReference>
<dbReference type="Gene3D" id="1.10.287.110">
    <property type="entry name" value="DnaJ domain"/>
    <property type="match status" value="1"/>
</dbReference>
<dbReference type="Gene3D" id="2.10.230.10">
    <property type="entry name" value="Heat shock protein DnaJ, cysteine-rich domain"/>
    <property type="match status" value="1"/>
</dbReference>
<dbReference type="Gene3D" id="2.60.260.20">
    <property type="entry name" value="Urease metallochaperone UreE, N-terminal domain"/>
    <property type="match status" value="2"/>
</dbReference>
<dbReference type="HAMAP" id="MF_01152">
    <property type="entry name" value="DnaJ"/>
    <property type="match status" value="1"/>
</dbReference>
<dbReference type="InterPro" id="IPR012724">
    <property type="entry name" value="DnaJ"/>
</dbReference>
<dbReference type="InterPro" id="IPR002939">
    <property type="entry name" value="DnaJ_C"/>
</dbReference>
<dbReference type="InterPro" id="IPR001623">
    <property type="entry name" value="DnaJ_domain"/>
</dbReference>
<dbReference type="InterPro" id="IPR008971">
    <property type="entry name" value="HSP40/DnaJ_pept-bd"/>
</dbReference>
<dbReference type="InterPro" id="IPR001305">
    <property type="entry name" value="HSP_DnaJ_Cys-rich_dom"/>
</dbReference>
<dbReference type="InterPro" id="IPR036410">
    <property type="entry name" value="HSP_DnaJ_Cys-rich_dom_sf"/>
</dbReference>
<dbReference type="InterPro" id="IPR036869">
    <property type="entry name" value="J_dom_sf"/>
</dbReference>
<dbReference type="NCBIfam" id="TIGR02349">
    <property type="entry name" value="DnaJ_bact"/>
    <property type="match status" value="1"/>
</dbReference>
<dbReference type="NCBIfam" id="NF008035">
    <property type="entry name" value="PRK10767.1"/>
    <property type="match status" value="1"/>
</dbReference>
<dbReference type="PANTHER" id="PTHR43096">
    <property type="entry name" value="DNAJ HOMOLOG 1, MITOCHONDRIAL-RELATED"/>
    <property type="match status" value="1"/>
</dbReference>
<dbReference type="PANTHER" id="PTHR43096:SF52">
    <property type="entry name" value="DNAJ HOMOLOG 1, MITOCHONDRIAL-RELATED"/>
    <property type="match status" value="1"/>
</dbReference>
<dbReference type="Pfam" id="PF00226">
    <property type="entry name" value="DnaJ"/>
    <property type="match status" value="1"/>
</dbReference>
<dbReference type="Pfam" id="PF01556">
    <property type="entry name" value="DnaJ_C"/>
    <property type="match status" value="1"/>
</dbReference>
<dbReference type="Pfam" id="PF00684">
    <property type="entry name" value="DnaJ_CXXCXGXG"/>
    <property type="match status" value="1"/>
</dbReference>
<dbReference type="PRINTS" id="PR00625">
    <property type="entry name" value="JDOMAIN"/>
</dbReference>
<dbReference type="SMART" id="SM00271">
    <property type="entry name" value="DnaJ"/>
    <property type="match status" value="1"/>
</dbReference>
<dbReference type="SUPFAM" id="SSF46565">
    <property type="entry name" value="Chaperone J-domain"/>
    <property type="match status" value="1"/>
</dbReference>
<dbReference type="SUPFAM" id="SSF57938">
    <property type="entry name" value="DnaJ/Hsp40 cysteine-rich domain"/>
    <property type="match status" value="1"/>
</dbReference>
<dbReference type="SUPFAM" id="SSF49493">
    <property type="entry name" value="HSP40/DnaJ peptide-binding domain"/>
    <property type="match status" value="2"/>
</dbReference>
<dbReference type="PROSITE" id="PS50076">
    <property type="entry name" value="DNAJ_2"/>
    <property type="match status" value="1"/>
</dbReference>
<dbReference type="PROSITE" id="PS51188">
    <property type="entry name" value="ZF_CR"/>
    <property type="match status" value="1"/>
</dbReference>
<organism>
    <name type="scientific">Orientia tsutsugamushi (strain Ikeda)</name>
    <name type="common">Rickettsia tsutsugamushi</name>
    <dbReference type="NCBI Taxonomy" id="334380"/>
    <lineage>
        <taxon>Bacteria</taxon>
        <taxon>Pseudomonadati</taxon>
        <taxon>Pseudomonadota</taxon>
        <taxon>Alphaproteobacteria</taxon>
        <taxon>Rickettsiales</taxon>
        <taxon>Rickettsiaceae</taxon>
        <taxon>Rickettsieae</taxon>
        <taxon>Orientia</taxon>
    </lineage>
</organism>
<feature type="chain" id="PRO_1000137708" description="Chaperone protein DnaJ">
    <location>
        <begin position="1"/>
        <end position="377"/>
    </location>
</feature>
<feature type="domain" description="J" evidence="1">
    <location>
        <begin position="5"/>
        <end position="70"/>
    </location>
</feature>
<feature type="repeat" description="CXXCXGXG motif">
    <location>
        <begin position="151"/>
        <end position="158"/>
    </location>
</feature>
<feature type="repeat" description="CXXCXGXG motif">
    <location>
        <begin position="168"/>
        <end position="175"/>
    </location>
</feature>
<feature type="repeat" description="CXXCXGXG motif">
    <location>
        <begin position="190"/>
        <end position="197"/>
    </location>
</feature>
<feature type="repeat" description="CXXCXGXG motif">
    <location>
        <begin position="204"/>
        <end position="211"/>
    </location>
</feature>
<feature type="zinc finger region" description="CR-type" evidence="1">
    <location>
        <begin position="138"/>
        <end position="216"/>
    </location>
</feature>
<feature type="binding site" evidence="1">
    <location>
        <position position="151"/>
    </location>
    <ligand>
        <name>Zn(2+)</name>
        <dbReference type="ChEBI" id="CHEBI:29105"/>
        <label>1</label>
    </ligand>
</feature>
<feature type="binding site" evidence="1">
    <location>
        <position position="154"/>
    </location>
    <ligand>
        <name>Zn(2+)</name>
        <dbReference type="ChEBI" id="CHEBI:29105"/>
        <label>1</label>
    </ligand>
</feature>
<feature type="binding site" evidence="1">
    <location>
        <position position="168"/>
    </location>
    <ligand>
        <name>Zn(2+)</name>
        <dbReference type="ChEBI" id="CHEBI:29105"/>
        <label>2</label>
    </ligand>
</feature>
<feature type="binding site" evidence="1">
    <location>
        <position position="171"/>
    </location>
    <ligand>
        <name>Zn(2+)</name>
        <dbReference type="ChEBI" id="CHEBI:29105"/>
        <label>2</label>
    </ligand>
</feature>
<feature type="binding site" evidence="1">
    <location>
        <position position="190"/>
    </location>
    <ligand>
        <name>Zn(2+)</name>
        <dbReference type="ChEBI" id="CHEBI:29105"/>
        <label>2</label>
    </ligand>
</feature>
<feature type="binding site" evidence="1">
    <location>
        <position position="193"/>
    </location>
    <ligand>
        <name>Zn(2+)</name>
        <dbReference type="ChEBI" id="CHEBI:29105"/>
        <label>2</label>
    </ligand>
</feature>
<feature type="binding site" evidence="1">
    <location>
        <position position="204"/>
    </location>
    <ligand>
        <name>Zn(2+)</name>
        <dbReference type="ChEBI" id="CHEBI:29105"/>
        <label>1</label>
    </ligand>
</feature>
<feature type="binding site" evidence="1">
    <location>
        <position position="207"/>
    </location>
    <ligand>
        <name>Zn(2+)</name>
        <dbReference type="ChEBI" id="CHEBI:29105"/>
        <label>1</label>
    </ligand>
</feature>
<evidence type="ECO:0000255" key="1">
    <source>
        <dbReference type="HAMAP-Rule" id="MF_01152"/>
    </source>
</evidence>
<protein>
    <recommendedName>
        <fullName evidence="1">Chaperone protein DnaJ</fullName>
    </recommendedName>
</protein>
<name>DNAJ_ORITI</name>
<sequence>MSELDYYQVLGVSRTASQEEIKRAYRKLVLKYHPDHNPGDKNAEQKIKNINEAYDILKDEKKRSAYDQLGHQTFKNSGGGNYQQHHGFTGGIDPNDIFENIFGDFMGARRSSKTAFSKKAGANLKYDISLTLEEAFYGVTKIISFKTALTCEACTGKGSLDNNSTSSCPTCRGSGVTRSQQGFFFFENTCQTCRGAGHVIKNPCTKCYGEGRYINTRNLEVKIPAGVKEGSRIKLTGEGEAGSRGGKTGDLYVCITLIPHNTFSVDGNDLHCQLDINCTTAALGGEVEVTDITGSKLKLKIPAGTQNNHKLKLSGKGMQILHSDRCGNMIVHVNIKVPKSLTKSQRELMIKLDKELNEASEEGFLSKVRNFWTSGSE</sequence>
<proteinExistence type="inferred from homology"/>
<keyword id="KW-0143">Chaperone</keyword>
<keyword id="KW-0963">Cytoplasm</keyword>
<keyword id="KW-0235">DNA replication</keyword>
<keyword id="KW-0479">Metal-binding</keyword>
<keyword id="KW-0677">Repeat</keyword>
<keyword id="KW-0346">Stress response</keyword>
<keyword id="KW-0862">Zinc</keyword>
<keyword id="KW-0863">Zinc-finger</keyword>
<reference key="1">
    <citation type="journal article" date="2008" name="DNA Res.">
        <title>The whole-genome sequencing of the obligate intracellular bacterium Orientia tsutsugamushi revealed massive gene amplification during reductive genome evolution.</title>
        <authorList>
            <person name="Nakayama K."/>
            <person name="Yamashita A."/>
            <person name="Kurokawa K."/>
            <person name="Morimoto T."/>
            <person name="Ogawa M."/>
            <person name="Fukuhara M."/>
            <person name="Urakami H."/>
            <person name="Ohnishi M."/>
            <person name="Uchiyama I."/>
            <person name="Ogura Y."/>
            <person name="Ooka T."/>
            <person name="Oshima K."/>
            <person name="Tamura A."/>
            <person name="Hattori M."/>
            <person name="Hayashi T."/>
        </authorList>
    </citation>
    <scope>NUCLEOTIDE SEQUENCE [LARGE SCALE GENOMIC DNA]</scope>
    <source>
        <strain>Ikeda</strain>
    </source>
</reference>
<gene>
    <name evidence="1" type="primary">dnaJ</name>
    <name type="ordered locus">OTT_1878</name>
</gene>